<dbReference type="EC" id="4.2.1.59" evidence="1"/>
<dbReference type="EC" id="5.3.3.14" evidence="1"/>
<dbReference type="EMBL" id="CP000948">
    <property type="protein sequence ID" value="ACB02154.1"/>
    <property type="molecule type" value="Genomic_DNA"/>
</dbReference>
<dbReference type="RefSeq" id="WP_000227927.1">
    <property type="nucleotide sequence ID" value="NC_010473.1"/>
</dbReference>
<dbReference type="SMR" id="B1X8Q8"/>
<dbReference type="GeneID" id="93776460"/>
<dbReference type="KEGG" id="ecd:ECDH10B_1024"/>
<dbReference type="HOGENOM" id="CLU_097925_0_0_6"/>
<dbReference type="UniPathway" id="UPA00094"/>
<dbReference type="GO" id="GO:0005737">
    <property type="term" value="C:cytoplasm"/>
    <property type="evidence" value="ECO:0007669"/>
    <property type="project" value="UniProtKB-SubCell"/>
</dbReference>
<dbReference type="GO" id="GO:0019171">
    <property type="term" value="F:(3R)-hydroxyacyl-[acyl-carrier-protein] dehydratase activity"/>
    <property type="evidence" value="ECO:0007669"/>
    <property type="project" value="UniProtKB-UniRule"/>
</dbReference>
<dbReference type="GO" id="GO:0034017">
    <property type="term" value="F:trans-2-decenoyl-acyl-carrier-protein isomerase activity"/>
    <property type="evidence" value="ECO:0007669"/>
    <property type="project" value="UniProtKB-UniRule"/>
</dbReference>
<dbReference type="GO" id="GO:0006636">
    <property type="term" value="P:unsaturated fatty acid biosynthetic process"/>
    <property type="evidence" value="ECO:0007669"/>
    <property type="project" value="UniProtKB-UniRule"/>
</dbReference>
<dbReference type="CDD" id="cd01287">
    <property type="entry name" value="FabA"/>
    <property type="match status" value="1"/>
</dbReference>
<dbReference type="FunFam" id="3.10.129.10:FF:000003">
    <property type="entry name" value="3-hydroxydecanoyl-[acyl-carrier-protein] dehydratase"/>
    <property type="match status" value="1"/>
</dbReference>
<dbReference type="Gene3D" id="3.10.129.10">
    <property type="entry name" value="Hotdog Thioesterase"/>
    <property type="match status" value="1"/>
</dbReference>
<dbReference type="HAMAP" id="MF_00405">
    <property type="entry name" value="FabA"/>
    <property type="match status" value="1"/>
</dbReference>
<dbReference type="InterPro" id="IPR010083">
    <property type="entry name" value="FabA"/>
</dbReference>
<dbReference type="InterPro" id="IPR013114">
    <property type="entry name" value="FabA_FabZ"/>
</dbReference>
<dbReference type="InterPro" id="IPR029069">
    <property type="entry name" value="HotDog_dom_sf"/>
</dbReference>
<dbReference type="NCBIfam" id="TIGR01749">
    <property type="entry name" value="fabA"/>
    <property type="match status" value="1"/>
</dbReference>
<dbReference type="NCBIfam" id="NF003509">
    <property type="entry name" value="PRK05174.1"/>
    <property type="match status" value="1"/>
</dbReference>
<dbReference type="PANTHER" id="PTHR30272">
    <property type="entry name" value="3-HYDROXYACYL-[ACYL-CARRIER-PROTEIN] DEHYDRATASE"/>
    <property type="match status" value="1"/>
</dbReference>
<dbReference type="PANTHER" id="PTHR30272:SF8">
    <property type="entry name" value="3-HYDROXYDECANOYL-[ACYL-CARRIER-PROTEIN] DEHYDRATASE"/>
    <property type="match status" value="1"/>
</dbReference>
<dbReference type="Pfam" id="PF07977">
    <property type="entry name" value="FabA"/>
    <property type="match status" value="1"/>
</dbReference>
<dbReference type="SUPFAM" id="SSF54637">
    <property type="entry name" value="Thioesterase/thiol ester dehydrase-isomerase"/>
    <property type="match status" value="1"/>
</dbReference>
<protein>
    <recommendedName>
        <fullName evidence="1">3-hydroxydecanoyl-[acyl-carrier-protein] dehydratase</fullName>
        <ecNumber evidence="1">4.2.1.59</ecNumber>
    </recommendedName>
    <alternativeName>
        <fullName evidence="1">3-hydroxyacyl-[acyl-carrier-protein] dehydratase FabA</fullName>
    </alternativeName>
    <alternativeName>
        <fullName evidence="1">Beta-hydroxydecanoyl thioester dehydrase</fullName>
    </alternativeName>
    <alternativeName>
        <fullName evidence="1">Trans-2-decenoyl-[acyl-carrier-protein] isomerase</fullName>
        <ecNumber evidence="1">5.3.3.14</ecNumber>
    </alternativeName>
</protein>
<proteinExistence type="inferred from homology"/>
<evidence type="ECO:0000255" key="1">
    <source>
        <dbReference type="HAMAP-Rule" id="MF_00405"/>
    </source>
</evidence>
<organism>
    <name type="scientific">Escherichia coli (strain K12 / DH10B)</name>
    <dbReference type="NCBI Taxonomy" id="316385"/>
    <lineage>
        <taxon>Bacteria</taxon>
        <taxon>Pseudomonadati</taxon>
        <taxon>Pseudomonadota</taxon>
        <taxon>Gammaproteobacteria</taxon>
        <taxon>Enterobacterales</taxon>
        <taxon>Enterobacteriaceae</taxon>
        <taxon>Escherichia</taxon>
    </lineage>
</organism>
<reference key="1">
    <citation type="journal article" date="2008" name="J. Bacteriol.">
        <title>The complete genome sequence of Escherichia coli DH10B: insights into the biology of a laboratory workhorse.</title>
        <authorList>
            <person name="Durfee T."/>
            <person name="Nelson R."/>
            <person name="Baldwin S."/>
            <person name="Plunkett G. III"/>
            <person name="Burland V."/>
            <person name="Mau B."/>
            <person name="Petrosino J.F."/>
            <person name="Qin X."/>
            <person name="Muzny D.M."/>
            <person name="Ayele M."/>
            <person name="Gibbs R.A."/>
            <person name="Csorgo B."/>
            <person name="Posfai G."/>
            <person name="Weinstock G.M."/>
            <person name="Blattner F.R."/>
        </authorList>
    </citation>
    <scope>NUCLEOTIDE SEQUENCE [LARGE SCALE GENOMIC DNA]</scope>
    <source>
        <strain>K12 / DH10B</strain>
    </source>
</reference>
<sequence length="172" mass="18969">MVDKRESYTKEDLLASGRGELFGAKGPQLPAPNMLMMDRVVKMTETGGNFDKGYVEAELDINPDLWFFGCHFIGDPVMPGCLGLDAMWQLVGFYLGWLGGEGKGRALGVGEVKFTGQVLPTAKKVTYRIHFKRIVNRRLIMGLADGEVLVDGRLIYTASDLKVGLFQDTSAF</sequence>
<gene>
    <name evidence="1" type="primary">fabA</name>
    <name type="ordered locus">ECDH10B_1024</name>
</gene>
<accession>B1X8Q8</accession>
<comment type="function">
    <text evidence="1">Necessary for the introduction of cis unsaturation into fatty acids. Catalyzes the dehydration of (3R)-3-hydroxydecanoyl-ACP to E-(2)-decenoyl-ACP and then its isomerization to Z-(3)-decenoyl-ACP. Can catalyze the dehydratase reaction for beta-hydroxyacyl-ACPs with saturated chain lengths up to 16:0, being most active on intermediate chain length.</text>
</comment>
<comment type="catalytic activity">
    <reaction evidence="1">
        <text>a (3R)-hydroxyacyl-[ACP] = a (2E)-enoyl-[ACP] + H2O</text>
        <dbReference type="Rhea" id="RHEA:13097"/>
        <dbReference type="Rhea" id="RHEA-COMP:9925"/>
        <dbReference type="Rhea" id="RHEA-COMP:9945"/>
        <dbReference type="ChEBI" id="CHEBI:15377"/>
        <dbReference type="ChEBI" id="CHEBI:78784"/>
        <dbReference type="ChEBI" id="CHEBI:78827"/>
        <dbReference type="EC" id="4.2.1.59"/>
    </reaction>
</comment>
<comment type="catalytic activity">
    <reaction evidence="1">
        <text>(3R)-hydroxydecanoyl-[ACP] = (2E)-decenoyl-[ACP] + H2O</text>
        <dbReference type="Rhea" id="RHEA:41860"/>
        <dbReference type="Rhea" id="RHEA-COMP:9638"/>
        <dbReference type="Rhea" id="RHEA-COMP:9639"/>
        <dbReference type="ChEBI" id="CHEBI:15377"/>
        <dbReference type="ChEBI" id="CHEBI:78466"/>
        <dbReference type="ChEBI" id="CHEBI:78467"/>
    </reaction>
</comment>
<comment type="catalytic activity">
    <reaction evidence="1">
        <text>(2E)-decenoyl-[ACP] = (3Z)-decenoyl-[ACP]</text>
        <dbReference type="Rhea" id="RHEA:23568"/>
        <dbReference type="Rhea" id="RHEA-COMP:9639"/>
        <dbReference type="Rhea" id="RHEA-COMP:9927"/>
        <dbReference type="ChEBI" id="CHEBI:78467"/>
        <dbReference type="ChEBI" id="CHEBI:78798"/>
        <dbReference type="EC" id="5.3.3.14"/>
    </reaction>
</comment>
<comment type="pathway">
    <text evidence="1">Lipid metabolism; fatty acid biosynthesis.</text>
</comment>
<comment type="subunit">
    <text evidence="1">Homodimer.</text>
</comment>
<comment type="subcellular location">
    <subcellularLocation>
        <location evidence="1">Cytoplasm</location>
    </subcellularLocation>
</comment>
<comment type="similarity">
    <text evidence="1">Belongs to the thioester dehydratase family. FabA subfamily.</text>
</comment>
<name>FABA_ECODH</name>
<feature type="chain" id="PRO_1000201178" description="3-hydroxydecanoyl-[acyl-carrier-protein] dehydratase">
    <location>
        <begin position="1"/>
        <end position="172"/>
    </location>
</feature>
<feature type="active site" evidence="1">
    <location>
        <position position="71"/>
    </location>
</feature>
<keyword id="KW-0963">Cytoplasm</keyword>
<keyword id="KW-0275">Fatty acid biosynthesis</keyword>
<keyword id="KW-0276">Fatty acid metabolism</keyword>
<keyword id="KW-0413">Isomerase</keyword>
<keyword id="KW-0444">Lipid biosynthesis</keyword>
<keyword id="KW-0443">Lipid metabolism</keyword>
<keyword id="KW-0456">Lyase</keyword>